<name>PFS2_YEAST</name>
<gene>
    <name type="primary">PFS2</name>
    <name type="ordered locus">YNL317W</name>
    <name type="ORF">N0348</name>
</gene>
<feature type="chain" id="PRO_0000051122" description="Polyadenylation factor subunit 2">
    <location>
        <begin position="1"/>
        <end position="465"/>
    </location>
</feature>
<feature type="repeat" description="WD 1">
    <location>
        <begin position="133"/>
        <end position="163"/>
    </location>
</feature>
<feature type="repeat" description="WD 2">
    <location>
        <begin position="175"/>
        <end position="205"/>
    </location>
</feature>
<feature type="repeat" description="WD 3">
    <location>
        <begin position="217"/>
        <end position="247"/>
    </location>
</feature>
<feature type="repeat" description="WD 4">
    <location>
        <begin position="259"/>
        <end position="290"/>
    </location>
</feature>
<feature type="repeat" description="WD 5">
    <location>
        <begin position="348"/>
        <end position="378"/>
    </location>
</feature>
<feature type="region of interest" description="Disordered" evidence="1">
    <location>
        <begin position="1"/>
        <end position="26"/>
    </location>
</feature>
<feature type="region of interest" description="Disordered" evidence="1">
    <location>
        <begin position="417"/>
        <end position="465"/>
    </location>
</feature>
<feature type="compositionally biased region" description="Low complexity" evidence="1">
    <location>
        <begin position="1"/>
        <end position="20"/>
    </location>
</feature>
<feature type="compositionally biased region" description="Polar residues" evidence="1">
    <location>
        <begin position="454"/>
        <end position="465"/>
    </location>
</feature>
<feature type="sequence conflict" description="In Ref. 4; AAT93077." evidence="6" ref="4">
    <original>D</original>
    <variation>V</variation>
    <location>
        <position position="2"/>
    </location>
</feature>
<feature type="helix" evidence="8">
    <location>
        <begin position="36"/>
        <end position="47"/>
    </location>
</feature>
<feature type="helix" evidence="8">
    <location>
        <begin position="59"/>
        <end position="64"/>
    </location>
</feature>
<feature type="helix" evidence="8">
    <location>
        <begin position="68"/>
        <end position="70"/>
    </location>
</feature>
<feature type="helix" evidence="8">
    <location>
        <begin position="73"/>
        <end position="79"/>
    </location>
</feature>
<feature type="strand" evidence="8">
    <location>
        <begin position="83"/>
        <end position="88"/>
    </location>
</feature>
<feature type="strand" evidence="8">
    <location>
        <begin position="98"/>
        <end position="101"/>
    </location>
</feature>
<feature type="strand" evidence="8">
    <location>
        <begin position="105"/>
        <end position="111"/>
    </location>
</feature>
<feature type="strand" evidence="8">
    <location>
        <begin position="117"/>
        <end position="121"/>
    </location>
</feature>
<feature type="turn" evidence="8">
    <location>
        <begin position="122"/>
        <end position="124"/>
    </location>
</feature>
<feature type="strand" evidence="8">
    <location>
        <begin position="138"/>
        <end position="143"/>
    </location>
</feature>
<feature type="strand" evidence="8">
    <location>
        <begin position="150"/>
        <end position="154"/>
    </location>
</feature>
<feature type="strand" evidence="8">
    <location>
        <begin position="160"/>
        <end position="162"/>
    </location>
</feature>
<feature type="strand" evidence="8">
    <location>
        <begin position="168"/>
        <end position="170"/>
    </location>
</feature>
<feature type="strand" evidence="7">
    <location>
        <begin position="175"/>
        <end position="178"/>
    </location>
</feature>
<feature type="strand" evidence="8">
    <location>
        <begin position="180"/>
        <end position="185"/>
    </location>
</feature>
<feature type="strand" evidence="8">
    <location>
        <begin position="187"/>
        <end position="205"/>
    </location>
</feature>
<feature type="turn" evidence="8">
    <location>
        <begin position="206"/>
        <end position="208"/>
    </location>
</feature>
<feature type="strand" evidence="8">
    <location>
        <begin position="211"/>
        <end position="216"/>
    </location>
</feature>
<feature type="strand" evidence="8">
    <location>
        <begin position="222"/>
        <end position="227"/>
    </location>
</feature>
<feature type="strand" evidence="8">
    <location>
        <begin position="229"/>
        <end position="232"/>
    </location>
</feature>
<feature type="strand" evidence="8">
    <location>
        <begin position="234"/>
        <end position="238"/>
    </location>
</feature>
<feature type="strand" evidence="8">
    <location>
        <begin position="243"/>
        <end position="246"/>
    </location>
</feature>
<feature type="turn" evidence="8">
    <location>
        <begin position="248"/>
        <end position="250"/>
    </location>
</feature>
<feature type="strand" evidence="8">
    <location>
        <begin position="253"/>
        <end position="257"/>
    </location>
</feature>
<feature type="strand" evidence="8">
    <location>
        <begin position="264"/>
        <end position="269"/>
    </location>
</feature>
<feature type="turn" evidence="8">
    <location>
        <begin position="271"/>
        <end position="273"/>
    </location>
</feature>
<feature type="strand" evidence="8">
    <location>
        <begin position="276"/>
        <end position="281"/>
    </location>
</feature>
<feature type="turn" evidence="8">
    <location>
        <begin position="282"/>
        <end position="284"/>
    </location>
</feature>
<feature type="strand" evidence="8">
    <location>
        <begin position="285"/>
        <end position="290"/>
    </location>
</feature>
<feature type="helix" evidence="7">
    <location>
        <begin position="291"/>
        <end position="293"/>
    </location>
</feature>
<feature type="strand" evidence="8">
    <location>
        <begin position="296"/>
        <end position="302"/>
    </location>
</feature>
<feature type="strand" evidence="8">
    <location>
        <begin position="307"/>
        <end position="312"/>
    </location>
</feature>
<feature type="strand" evidence="8">
    <location>
        <begin position="314"/>
        <end position="316"/>
    </location>
</feature>
<feature type="strand" evidence="8">
    <location>
        <begin position="319"/>
        <end position="324"/>
    </location>
</feature>
<feature type="strand" evidence="8">
    <location>
        <begin position="327"/>
        <end position="333"/>
    </location>
</feature>
<feature type="turn" evidence="8">
    <location>
        <begin position="334"/>
        <end position="336"/>
    </location>
</feature>
<feature type="strand" evidence="8">
    <location>
        <begin position="337"/>
        <end position="340"/>
    </location>
</feature>
<feature type="strand" evidence="8">
    <location>
        <begin position="342"/>
        <end position="345"/>
    </location>
</feature>
<feature type="strand" evidence="8">
    <location>
        <begin position="348"/>
        <end position="351"/>
    </location>
</feature>
<feature type="strand" evidence="8">
    <location>
        <begin position="353"/>
        <end position="358"/>
    </location>
</feature>
<feature type="strand" evidence="8">
    <location>
        <begin position="362"/>
        <end position="369"/>
    </location>
</feature>
<feature type="strand" evidence="8">
    <location>
        <begin position="374"/>
        <end position="378"/>
    </location>
</feature>
<feature type="turn" evidence="8">
    <location>
        <begin position="385"/>
        <end position="389"/>
    </location>
</feature>
<feature type="turn" evidence="8">
    <location>
        <begin position="391"/>
        <end position="393"/>
    </location>
</feature>
<feature type="strand" evidence="7">
    <location>
        <begin position="399"/>
        <end position="402"/>
    </location>
</feature>
<feature type="helix" evidence="8">
    <location>
        <begin position="403"/>
        <end position="407"/>
    </location>
</feature>
<feature type="strand" evidence="8">
    <location>
        <begin position="409"/>
        <end position="412"/>
    </location>
</feature>
<feature type="strand" evidence="8">
    <location>
        <begin position="417"/>
        <end position="419"/>
    </location>
</feature>
<comment type="function">
    <text evidence="2">Integral and essential component of the cleavage and polyadenylation factor (CPF) complex, which plays a key role in polyadenylation-dependent pre-mRNA 3'-end formation and cooperates with cleavage factors including the CFIA complex and NAB4/CFIB. May bridge the CPF and CFIA complexes.</text>
</comment>
<comment type="subunit">
    <text evidence="2 3">Component of the cleavage and polyadenylation factor (CPF) complex, which is composed of at least PTI1, SYC1, SSU72, GLC7, MPE1, REF2, PFS2, PTA1, YSH1/BRR5, SWD2, CFT2/YDH1, YTH1, CFT1/YHH1, FIP1 and PAP1. Interacts with YSH1/BRR5, FIP1 and RNA14.</text>
</comment>
<comment type="subcellular location">
    <subcellularLocation>
        <location evidence="3 4">Nucleus</location>
    </subcellularLocation>
</comment>
<comment type="miscellaneous">
    <text evidence="5">Present with 7810 molecules/cell in log phase SD medium.</text>
</comment>
<reference key="1">
    <citation type="journal article" date="1995" name="Yeast">
        <title>Sequencing analysis of a 24.7 kb fragment of yeast chromosome XIV identifies six known genes, a new member of the hexose transporter family and ten new open reading frames.</title>
        <authorList>
            <person name="Maftahi M."/>
            <person name="Nicaud J.-M."/>
            <person name="Levesque H."/>
            <person name="Gaillardin C."/>
        </authorList>
    </citation>
    <scope>NUCLEOTIDE SEQUENCE [GENOMIC DNA]</scope>
    <source>
        <strain>S288c / FY1676</strain>
    </source>
</reference>
<reference key="2">
    <citation type="journal article" date="1997" name="Nature">
        <title>The nucleotide sequence of Saccharomyces cerevisiae chromosome XIV and its evolutionary implications.</title>
        <authorList>
            <person name="Philippsen P."/>
            <person name="Kleine K."/>
            <person name="Poehlmann R."/>
            <person name="Duesterhoeft A."/>
            <person name="Hamberg K."/>
            <person name="Hegemann J.H."/>
            <person name="Obermaier B."/>
            <person name="Urrestarazu L.A."/>
            <person name="Aert R."/>
            <person name="Albermann K."/>
            <person name="Altmann R."/>
            <person name="Andre B."/>
            <person name="Baladron V."/>
            <person name="Ballesta J.P.G."/>
            <person name="Becam A.-M."/>
            <person name="Beinhauer J.D."/>
            <person name="Boskovic J."/>
            <person name="Buitrago M.J."/>
            <person name="Bussereau F."/>
            <person name="Coster F."/>
            <person name="Crouzet M."/>
            <person name="D'Angelo M."/>
            <person name="Dal Pero F."/>
            <person name="De Antoni A."/>
            <person name="del Rey F."/>
            <person name="Doignon F."/>
            <person name="Domdey H."/>
            <person name="Dubois E."/>
            <person name="Fiedler T.A."/>
            <person name="Fleig U."/>
            <person name="Floeth M."/>
            <person name="Fritz C."/>
            <person name="Gaillardin C."/>
            <person name="Garcia-Cantalejo J.M."/>
            <person name="Glansdorff N."/>
            <person name="Goffeau A."/>
            <person name="Gueldener U."/>
            <person name="Herbert C.J."/>
            <person name="Heumann K."/>
            <person name="Heuss-Neitzel D."/>
            <person name="Hilbert H."/>
            <person name="Hinni K."/>
            <person name="Iraqui Houssaini I."/>
            <person name="Jacquet M."/>
            <person name="Jimenez A."/>
            <person name="Jonniaux J.-L."/>
            <person name="Karpfinger-Hartl L."/>
            <person name="Lanfranchi G."/>
            <person name="Lepingle A."/>
            <person name="Levesque H."/>
            <person name="Lyck R."/>
            <person name="Maftahi M."/>
            <person name="Mallet L."/>
            <person name="Maurer C.T.C."/>
            <person name="Messenguy F."/>
            <person name="Mewes H.-W."/>
            <person name="Moestl D."/>
            <person name="Nasr F."/>
            <person name="Nicaud J.-M."/>
            <person name="Niedenthal R.K."/>
            <person name="Pandolfo D."/>
            <person name="Pierard A."/>
            <person name="Piravandi E."/>
            <person name="Planta R.J."/>
            <person name="Pohl T.M."/>
            <person name="Purnelle B."/>
            <person name="Rebischung C."/>
            <person name="Remacha M.A."/>
            <person name="Revuelta J.L."/>
            <person name="Rinke M."/>
            <person name="Saiz J.E."/>
            <person name="Sartorello F."/>
            <person name="Scherens B."/>
            <person name="Sen-Gupta M."/>
            <person name="Soler-Mira A."/>
            <person name="Urbanus J.H.M."/>
            <person name="Valle G."/>
            <person name="Van Dyck L."/>
            <person name="Verhasselt P."/>
            <person name="Vierendeels F."/>
            <person name="Vissers S."/>
            <person name="Voet M."/>
            <person name="Volckaert G."/>
            <person name="Wach A."/>
            <person name="Wambutt R."/>
            <person name="Wedler H."/>
            <person name="Zollner A."/>
            <person name="Hani J."/>
        </authorList>
    </citation>
    <scope>NUCLEOTIDE SEQUENCE [LARGE SCALE GENOMIC DNA]</scope>
    <source>
        <strain>ATCC 204508 / S288c</strain>
    </source>
</reference>
<reference key="3">
    <citation type="journal article" date="2014" name="G3 (Bethesda)">
        <title>The reference genome sequence of Saccharomyces cerevisiae: Then and now.</title>
        <authorList>
            <person name="Engel S.R."/>
            <person name="Dietrich F.S."/>
            <person name="Fisk D.G."/>
            <person name="Binkley G."/>
            <person name="Balakrishnan R."/>
            <person name="Costanzo M.C."/>
            <person name="Dwight S.S."/>
            <person name="Hitz B.C."/>
            <person name="Karra K."/>
            <person name="Nash R.S."/>
            <person name="Weng S."/>
            <person name="Wong E.D."/>
            <person name="Lloyd P."/>
            <person name="Skrzypek M.S."/>
            <person name="Miyasato S.R."/>
            <person name="Simison M."/>
            <person name="Cherry J.M."/>
        </authorList>
    </citation>
    <scope>GENOME REANNOTATION</scope>
    <source>
        <strain>ATCC 204508 / S288c</strain>
    </source>
</reference>
<reference key="4">
    <citation type="journal article" date="2007" name="Genome Res.">
        <title>Approaching a complete repository of sequence-verified protein-encoding clones for Saccharomyces cerevisiae.</title>
        <authorList>
            <person name="Hu Y."/>
            <person name="Rolfs A."/>
            <person name="Bhullar B."/>
            <person name="Murthy T.V.S."/>
            <person name="Zhu C."/>
            <person name="Berger M.F."/>
            <person name="Camargo A.A."/>
            <person name="Kelley F."/>
            <person name="McCarron S."/>
            <person name="Jepson D."/>
            <person name="Richardson A."/>
            <person name="Raphael J."/>
            <person name="Moreira D."/>
            <person name="Taycher E."/>
            <person name="Zuo D."/>
            <person name="Mohr S."/>
            <person name="Kane M.F."/>
            <person name="Williamson J."/>
            <person name="Simpson A.J.G."/>
            <person name="Bulyk M.L."/>
            <person name="Harlow E."/>
            <person name="Marsischky G."/>
            <person name="Kolodner R.D."/>
            <person name="LaBaer J."/>
        </authorList>
    </citation>
    <scope>NUCLEOTIDE SEQUENCE [GENOMIC DNA]</scope>
    <source>
        <strain>ATCC 204508 / S288c</strain>
    </source>
</reference>
<reference key="5">
    <citation type="journal article" date="2000" name="EMBO J.">
        <title>The WD-repeat protein pfs2p bridges two essential factors within the yeast pre-mRNA 3'-end-processing complex.</title>
        <authorList>
            <person name="Ohnacker M."/>
            <person name="Barabino S.M.L."/>
            <person name="Preker P.J."/>
            <person name="Keller W."/>
        </authorList>
    </citation>
    <scope>PROTEIN SEQUENCE OF 83-91</scope>
    <scope>FUNCTION</scope>
    <scope>IDENTIFICATION IN THE CPF COMPLEX</scope>
    <scope>INTERACTION WITH YSH1; FIP1 AND RNA14</scope>
</reference>
<reference key="6">
    <citation type="journal article" date="2003" name="J. Biol. Chem.">
        <title>Organization and function of APT, a subcomplex of the yeast cleavage and polyadenylation factor involved in the formation of mRNA and small nucleolar RNA 3'-ends.</title>
        <authorList>
            <person name="Nedea E."/>
            <person name="He X."/>
            <person name="Kim M."/>
            <person name="Pootoolal J."/>
            <person name="Zhong G."/>
            <person name="Canadien V."/>
            <person name="Hughes T."/>
            <person name="Buratowski S."/>
            <person name="Moore C.L."/>
            <person name="Greenblatt J."/>
        </authorList>
    </citation>
    <scope>IDENTIFICATION IN THE CPF COMPLEX</scope>
    <scope>SUBCELLULAR LOCATION</scope>
    <scope>IDENTIFICATION BY MASS SPECTROMETRY</scope>
</reference>
<reference key="7">
    <citation type="journal article" date="2003" name="Nature">
        <title>Global analysis of protein localization in budding yeast.</title>
        <authorList>
            <person name="Huh W.-K."/>
            <person name="Falvo J.V."/>
            <person name="Gerke L.C."/>
            <person name="Carroll A.S."/>
            <person name="Howson R.W."/>
            <person name="Weissman J.S."/>
            <person name="O'Shea E.K."/>
        </authorList>
    </citation>
    <scope>SUBCELLULAR LOCATION [LARGE SCALE ANALYSIS]</scope>
</reference>
<reference key="8">
    <citation type="journal article" date="2003" name="Nature">
        <title>Global analysis of protein expression in yeast.</title>
        <authorList>
            <person name="Ghaemmaghami S."/>
            <person name="Huh W.-K."/>
            <person name="Bower K."/>
            <person name="Howson R.W."/>
            <person name="Belle A."/>
            <person name="Dephoure N."/>
            <person name="O'Shea E.K."/>
            <person name="Weissman J.S."/>
        </authorList>
    </citation>
    <scope>LEVEL OF PROTEIN EXPRESSION [LARGE SCALE ANALYSIS]</scope>
</reference>
<dbReference type="EMBL" id="Z46259">
    <property type="protein sequence ID" value="CAA86378.1"/>
    <property type="molecule type" value="Genomic_DNA"/>
</dbReference>
<dbReference type="EMBL" id="Z71593">
    <property type="protein sequence ID" value="CAA96247.1"/>
    <property type="molecule type" value="Genomic_DNA"/>
</dbReference>
<dbReference type="EMBL" id="AY693058">
    <property type="protein sequence ID" value="AAT93077.1"/>
    <property type="molecule type" value="Genomic_DNA"/>
</dbReference>
<dbReference type="EMBL" id="BK006947">
    <property type="protein sequence ID" value="DAA10244.1"/>
    <property type="molecule type" value="Genomic_DNA"/>
</dbReference>
<dbReference type="PIR" id="S51295">
    <property type="entry name" value="S51295"/>
</dbReference>
<dbReference type="RefSeq" id="NP_014082.1">
    <property type="nucleotide sequence ID" value="NM_001183155.1"/>
</dbReference>
<dbReference type="PDB" id="6EOJ">
    <property type="method" value="EM"/>
    <property type="resolution" value="3.55 A"/>
    <property type="chains" value="D=1-465"/>
</dbReference>
<dbReference type="PDB" id="7ZGP">
    <property type="method" value="EM"/>
    <property type="resolution" value="2.70 A"/>
    <property type="chains" value="D=1-465"/>
</dbReference>
<dbReference type="PDB" id="7ZGQ">
    <property type="method" value="EM"/>
    <property type="resolution" value="2.80 A"/>
    <property type="chains" value="D=1-465"/>
</dbReference>
<dbReference type="PDB" id="7ZGR">
    <property type="method" value="EM"/>
    <property type="resolution" value="2.60 A"/>
    <property type="chains" value="D=1-465"/>
</dbReference>
<dbReference type="PDBsum" id="6EOJ"/>
<dbReference type="PDBsum" id="7ZGP"/>
<dbReference type="PDBsum" id="7ZGQ"/>
<dbReference type="PDBsum" id="7ZGR"/>
<dbReference type="EMDB" id="EMD-3908"/>
<dbReference type="SMR" id="P42841"/>
<dbReference type="BioGRID" id="35522">
    <property type="interactions" value="45"/>
</dbReference>
<dbReference type="ComplexPortal" id="CPX-1053">
    <property type="entry name" value="Cleavage and polyadenylation specificity factor complex"/>
</dbReference>
<dbReference type="DIP" id="DIP-5816N"/>
<dbReference type="FunCoup" id="P42841">
    <property type="interactions" value="298"/>
</dbReference>
<dbReference type="IntAct" id="P42841">
    <property type="interactions" value="39"/>
</dbReference>
<dbReference type="MINT" id="P42841"/>
<dbReference type="STRING" id="4932.YNL317W"/>
<dbReference type="iPTMnet" id="P42841"/>
<dbReference type="PaxDb" id="4932-YNL317W"/>
<dbReference type="PeptideAtlas" id="P42841"/>
<dbReference type="EnsemblFungi" id="YNL317W_mRNA">
    <property type="protein sequence ID" value="YNL317W"/>
    <property type="gene ID" value="YNL317W"/>
</dbReference>
<dbReference type="GeneID" id="855399"/>
<dbReference type="KEGG" id="sce:YNL317W"/>
<dbReference type="AGR" id="SGD:S000005261"/>
<dbReference type="SGD" id="S000005261">
    <property type="gene designation" value="PFS2"/>
</dbReference>
<dbReference type="VEuPathDB" id="FungiDB:YNL317W"/>
<dbReference type="eggNOG" id="KOG0284">
    <property type="taxonomic scope" value="Eukaryota"/>
</dbReference>
<dbReference type="GeneTree" id="ENSGT00730000111130"/>
<dbReference type="HOGENOM" id="CLU_000288_77_0_1"/>
<dbReference type="InParanoid" id="P42841"/>
<dbReference type="OMA" id="HHWDVKS"/>
<dbReference type="OrthoDB" id="16717at2759"/>
<dbReference type="BioCyc" id="YEAST:G3O-33303-MONOMER"/>
<dbReference type="Reactome" id="R-SCE-77595">
    <property type="pathway name" value="Processing of Intronless Pre-mRNAs"/>
</dbReference>
<dbReference type="BioGRID-ORCS" id="855399">
    <property type="hits" value="6 hits in 10 CRISPR screens"/>
</dbReference>
<dbReference type="PRO" id="PR:P42841"/>
<dbReference type="Proteomes" id="UP000002311">
    <property type="component" value="Chromosome XIV"/>
</dbReference>
<dbReference type="RNAct" id="P42841">
    <property type="molecule type" value="protein"/>
</dbReference>
<dbReference type="GO" id="GO:0005847">
    <property type="term" value="C:mRNA cleavage and polyadenylation specificity factor complex"/>
    <property type="evidence" value="ECO:0000314"/>
    <property type="project" value="SGD"/>
</dbReference>
<dbReference type="GO" id="GO:0005634">
    <property type="term" value="C:nucleus"/>
    <property type="evidence" value="ECO:0000303"/>
    <property type="project" value="ComplexPortal"/>
</dbReference>
<dbReference type="GO" id="GO:0031124">
    <property type="term" value="P:mRNA 3'-end processing"/>
    <property type="evidence" value="ECO:0007669"/>
    <property type="project" value="InterPro"/>
</dbReference>
<dbReference type="GO" id="GO:0006397">
    <property type="term" value="P:mRNA processing"/>
    <property type="evidence" value="ECO:0000314"/>
    <property type="project" value="SGD"/>
</dbReference>
<dbReference type="GO" id="GO:0030846">
    <property type="term" value="P:termination of RNA polymerase II transcription, poly(A)-coupled"/>
    <property type="evidence" value="ECO:0000303"/>
    <property type="project" value="ComplexPortal"/>
</dbReference>
<dbReference type="CDD" id="cd00200">
    <property type="entry name" value="WD40"/>
    <property type="match status" value="1"/>
</dbReference>
<dbReference type="FunFam" id="2.130.10.10:FF:001119">
    <property type="entry name" value="Polyadenylation factor I"/>
    <property type="match status" value="1"/>
</dbReference>
<dbReference type="FunFam" id="2.130.10.10:FF:001206">
    <property type="entry name" value="Polyadenylation factor I"/>
    <property type="match status" value="1"/>
</dbReference>
<dbReference type="Gene3D" id="2.130.10.10">
    <property type="entry name" value="YVTN repeat-like/Quinoprotein amine dehydrogenase"/>
    <property type="match status" value="3"/>
</dbReference>
<dbReference type="InterPro" id="IPR045245">
    <property type="entry name" value="Pfs2-like"/>
</dbReference>
<dbReference type="InterPro" id="IPR015943">
    <property type="entry name" value="WD40/YVTN_repeat-like_dom_sf"/>
</dbReference>
<dbReference type="InterPro" id="IPR036322">
    <property type="entry name" value="WD40_repeat_dom_sf"/>
</dbReference>
<dbReference type="InterPro" id="IPR001680">
    <property type="entry name" value="WD40_rpt"/>
</dbReference>
<dbReference type="PANTHER" id="PTHR22836:SF0">
    <property type="entry name" value="PRE-MRNA 3' END PROCESSING PROTEIN WDR33"/>
    <property type="match status" value="1"/>
</dbReference>
<dbReference type="PANTHER" id="PTHR22836">
    <property type="entry name" value="WD40 REPEAT PROTEIN"/>
    <property type="match status" value="1"/>
</dbReference>
<dbReference type="Pfam" id="PF00400">
    <property type="entry name" value="WD40"/>
    <property type="match status" value="4"/>
</dbReference>
<dbReference type="SMART" id="SM00320">
    <property type="entry name" value="WD40"/>
    <property type="match status" value="7"/>
</dbReference>
<dbReference type="SUPFAM" id="SSF50978">
    <property type="entry name" value="WD40 repeat-like"/>
    <property type="match status" value="1"/>
</dbReference>
<dbReference type="PROSITE" id="PS50082">
    <property type="entry name" value="WD_REPEATS_2"/>
    <property type="match status" value="4"/>
</dbReference>
<dbReference type="PROSITE" id="PS50294">
    <property type="entry name" value="WD_REPEATS_REGION"/>
    <property type="match status" value="1"/>
</dbReference>
<protein>
    <recommendedName>
        <fullName>Polyadenylation factor subunit 2</fullName>
    </recommendedName>
</protein>
<evidence type="ECO:0000256" key="1">
    <source>
        <dbReference type="SAM" id="MobiDB-lite"/>
    </source>
</evidence>
<evidence type="ECO:0000269" key="2">
    <source>
    </source>
</evidence>
<evidence type="ECO:0000269" key="3">
    <source>
    </source>
</evidence>
<evidence type="ECO:0000269" key="4">
    <source>
    </source>
</evidence>
<evidence type="ECO:0000269" key="5">
    <source>
    </source>
</evidence>
<evidence type="ECO:0000305" key="6"/>
<evidence type="ECO:0007829" key="7">
    <source>
        <dbReference type="PDB" id="7ZGP"/>
    </source>
</evidence>
<evidence type="ECO:0007829" key="8">
    <source>
        <dbReference type="PDB" id="7ZGR"/>
    </source>
</evidence>
<accession>P42841</accession>
<accession>D6W0M8</accession>
<accession>Q6B1M2</accession>
<keyword id="KW-0002">3D-structure</keyword>
<keyword id="KW-0903">Direct protein sequencing</keyword>
<keyword id="KW-0507">mRNA processing</keyword>
<keyword id="KW-0539">Nucleus</keyword>
<keyword id="KW-1185">Reference proteome</keyword>
<keyword id="KW-0677">Repeat</keyword>
<keyword id="KW-0853">WD repeat</keyword>
<proteinExistence type="evidence at protein level"/>
<sequence length="465" mass="53143">MDGHNQNQYQNQNQIQQSQQPPLKKYVTQRRSVDVSSPYINLYYNRRHGLPNLVVEPETSYTIDIMPPNAYRGRDRVINLPSKFTHLSSNKVKHVIPAIQWTPEGRRLVVATYSGEFSLWNASSFTFETLMQAHDSAVTTMKYSHDSDWMISGDADGMIKIWQPNFSMVKEIDAAHTESIRDMAFSSNDSKFVTCSDDNILKIWNFSNGKQERVLSGHHWDVKSCDWHPEMGLIASASKDNLVKLWDPRSGNCISSILKFKHTVLKTRFQPTKGNLLMAISKDKSCRVFDIRYSMKELMCVRDETDYMTLEWHPINESMFTLACYDGSLKHFDLLQNLNEPILTIPYAHDKCITSLSYNPVGHIFATAAKDRTIRFWTRARPIDPNAYDDPTYNNKKINGWFFGINNDINAVREKSEFGAAPPPPATLEPHALPNMNGFINKKPRQEIPGIDSNIKSSTLPGLSI</sequence>
<organism>
    <name type="scientific">Saccharomyces cerevisiae (strain ATCC 204508 / S288c)</name>
    <name type="common">Baker's yeast</name>
    <dbReference type="NCBI Taxonomy" id="559292"/>
    <lineage>
        <taxon>Eukaryota</taxon>
        <taxon>Fungi</taxon>
        <taxon>Dikarya</taxon>
        <taxon>Ascomycota</taxon>
        <taxon>Saccharomycotina</taxon>
        <taxon>Saccharomycetes</taxon>
        <taxon>Saccharomycetales</taxon>
        <taxon>Saccharomycetaceae</taxon>
        <taxon>Saccharomyces</taxon>
    </lineage>
</organism>